<protein>
    <recommendedName>
        <fullName evidence="1">Ribose import ATP-binding protein RbsA</fullName>
        <ecNumber evidence="1">7.5.2.7</ecNumber>
    </recommendedName>
</protein>
<keyword id="KW-0067">ATP-binding</keyword>
<keyword id="KW-0997">Cell inner membrane</keyword>
<keyword id="KW-1003">Cell membrane</keyword>
<keyword id="KW-0472">Membrane</keyword>
<keyword id="KW-0547">Nucleotide-binding</keyword>
<keyword id="KW-1185">Reference proteome</keyword>
<keyword id="KW-0677">Repeat</keyword>
<keyword id="KW-0762">Sugar transport</keyword>
<keyword id="KW-1278">Translocase</keyword>
<keyword id="KW-0813">Transport</keyword>
<organism>
    <name type="scientific">Yersinia pestis</name>
    <dbReference type="NCBI Taxonomy" id="632"/>
    <lineage>
        <taxon>Bacteria</taxon>
        <taxon>Pseudomonadati</taxon>
        <taxon>Pseudomonadota</taxon>
        <taxon>Gammaproteobacteria</taxon>
        <taxon>Enterobacterales</taxon>
        <taxon>Yersiniaceae</taxon>
        <taxon>Yersinia</taxon>
    </lineage>
</organism>
<dbReference type="EC" id="7.5.2.7" evidence="1"/>
<dbReference type="EMBL" id="AL590842">
    <property type="protein sequence ID" value="CAL22545.1"/>
    <property type="molecule type" value="Genomic_DNA"/>
</dbReference>
<dbReference type="EMBL" id="AE009952">
    <property type="protein sequence ID" value="AAM87410.1"/>
    <property type="molecule type" value="Genomic_DNA"/>
</dbReference>
<dbReference type="EMBL" id="AE017042">
    <property type="protein sequence ID" value="AAS63492.1"/>
    <property type="molecule type" value="Genomic_DNA"/>
</dbReference>
<dbReference type="PIR" id="AF0482">
    <property type="entry name" value="AF0482"/>
</dbReference>
<dbReference type="RefSeq" id="WP_002209523.1">
    <property type="nucleotide sequence ID" value="NZ_WUCM01000071.1"/>
</dbReference>
<dbReference type="RefSeq" id="YP_002348835.1">
    <property type="nucleotide sequence ID" value="NC_003143.1"/>
</dbReference>
<dbReference type="SMR" id="Q7CG00"/>
<dbReference type="STRING" id="214092.YPO3964"/>
<dbReference type="PaxDb" id="214092-YPO3964"/>
<dbReference type="DNASU" id="1148812"/>
<dbReference type="EnsemblBacteria" id="AAS63492">
    <property type="protein sequence ID" value="AAS63492"/>
    <property type="gene ID" value="YP_3327"/>
</dbReference>
<dbReference type="KEGG" id="ype:YPO3964"/>
<dbReference type="KEGG" id="ypk:y3865"/>
<dbReference type="KEGG" id="ypm:YP_3327"/>
<dbReference type="PATRIC" id="fig|214092.21.peg.4495"/>
<dbReference type="eggNOG" id="COG1129">
    <property type="taxonomic scope" value="Bacteria"/>
</dbReference>
<dbReference type="HOGENOM" id="CLU_000604_92_3_6"/>
<dbReference type="OMA" id="KDIGHDQ"/>
<dbReference type="OrthoDB" id="9776369at2"/>
<dbReference type="Proteomes" id="UP000000815">
    <property type="component" value="Chromosome"/>
</dbReference>
<dbReference type="Proteomes" id="UP000001019">
    <property type="component" value="Chromosome"/>
</dbReference>
<dbReference type="Proteomes" id="UP000002490">
    <property type="component" value="Chromosome"/>
</dbReference>
<dbReference type="GO" id="GO:0005886">
    <property type="term" value="C:plasma membrane"/>
    <property type="evidence" value="ECO:0007669"/>
    <property type="project" value="UniProtKB-SubCell"/>
</dbReference>
<dbReference type="GO" id="GO:0015611">
    <property type="term" value="F:ABC-type D-ribose transporter activity"/>
    <property type="evidence" value="ECO:0007669"/>
    <property type="project" value="UniProtKB-EC"/>
</dbReference>
<dbReference type="GO" id="GO:0005524">
    <property type="term" value="F:ATP binding"/>
    <property type="evidence" value="ECO:0007669"/>
    <property type="project" value="UniProtKB-KW"/>
</dbReference>
<dbReference type="GO" id="GO:0016887">
    <property type="term" value="F:ATP hydrolysis activity"/>
    <property type="evidence" value="ECO:0007669"/>
    <property type="project" value="InterPro"/>
</dbReference>
<dbReference type="CDD" id="cd03216">
    <property type="entry name" value="ABC_Carb_Monos_I"/>
    <property type="match status" value="1"/>
</dbReference>
<dbReference type="CDD" id="cd03215">
    <property type="entry name" value="ABC_Carb_Monos_II"/>
    <property type="match status" value="1"/>
</dbReference>
<dbReference type="FunFam" id="3.40.50.300:FF:000127">
    <property type="entry name" value="Ribose import ATP-binding protein RbsA"/>
    <property type="match status" value="1"/>
</dbReference>
<dbReference type="Gene3D" id="3.40.50.300">
    <property type="entry name" value="P-loop containing nucleotide triphosphate hydrolases"/>
    <property type="match status" value="2"/>
</dbReference>
<dbReference type="InterPro" id="IPR003593">
    <property type="entry name" value="AAA+_ATPase"/>
</dbReference>
<dbReference type="InterPro" id="IPR050107">
    <property type="entry name" value="ABC_carbohydrate_import_ATPase"/>
</dbReference>
<dbReference type="InterPro" id="IPR003439">
    <property type="entry name" value="ABC_transporter-like_ATP-bd"/>
</dbReference>
<dbReference type="InterPro" id="IPR017871">
    <property type="entry name" value="ABC_transporter-like_CS"/>
</dbReference>
<dbReference type="InterPro" id="IPR027417">
    <property type="entry name" value="P-loop_NTPase"/>
</dbReference>
<dbReference type="PANTHER" id="PTHR43790">
    <property type="entry name" value="CARBOHYDRATE TRANSPORT ATP-BINDING PROTEIN MG119-RELATED"/>
    <property type="match status" value="1"/>
</dbReference>
<dbReference type="PANTHER" id="PTHR43790:SF3">
    <property type="entry name" value="D-ALLOSE IMPORT ATP-BINDING PROTEIN ALSA-RELATED"/>
    <property type="match status" value="1"/>
</dbReference>
<dbReference type="Pfam" id="PF00005">
    <property type="entry name" value="ABC_tran"/>
    <property type="match status" value="2"/>
</dbReference>
<dbReference type="SMART" id="SM00382">
    <property type="entry name" value="AAA"/>
    <property type="match status" value="2"/>
</dbReference>
<dbReference type="SUPFAM" id="SSF52540">
    <property type="entry name" value="P-loop containing nucleoside triphosphate hydrolases"/>
    <property type="match status" value="2"/>
</dbReference>
<dbReference type="PROSITE" id="PS00211">
    <property type="entry name" value="ABC_TRANSPORTER_1"/>
    <property type="match status" value="1"/>
</dbReference>
<dbReference type="PROSITE" id="PS50893">
    <property type="entry name" value="ABC_TRANSPORTER_2"/>
    <property type="match status" value="2"/>
</dbReference>
<dbReference type="PROSITE" id="PS51254">
    <property type="entry name" value="RBSA"/>
    <property type="match status" value="1"/>
</dbReference>
<feature type="chain" id="PRO_0000261120" description="Ribose import ATP-binding protein RbsA">
    <location>
        <begin position="1"/>
        <end position="507"/>
    </location>
</feature>
<feature type="domain" description="ABC transporter 1" evidence="1">
    <location>
        <begin position="7"/>
        <end position="242"/>
    </location>
</feature>
<feature type="domain" description="ABC transporter 2" evidence="1">
    <location>
        <begin position="253"/>
        <end position="497"/>
    </location>
</feature>
<feature type="binding site" evidence="1">
    <location>
        <begin position="39"/>
        <end position="46"/>
    </location>
    <ligand>
        <name>ATP</name>
        <dbReference type="ChEBI" id="CHEBI:30616"/>
    </ligand>
</feature>
<sequence length="507" mass="55846">MNKVPLLEMRNITKSFGKFQALKGVDLTVFSGEIHALMGENGAGKSTLMKILAGAYTTTSGEILIEGRPWSIKGPKDALNAGISLIYQEMQLAPNLTVAENIFLGSELSRGGLVQRKEMVMQTQAVIDRLGAQFKASDLVMGLTIAEQQQVEIARALHRNSRILVMDEPTAALSTRETHRLFELILRLRDEGMAIIYISHRMAEVYELSDRVSVLRDGQYVGSLMRANLNANELVRMMVGRPLSDLFNKERDIPLGHLRLKVHHLTDGAKVQAVSLQVRSGEIVGLAGLVGAGRSELAQLIFGVRKATGGTIEIDGVPLVIHSPREAIRHGIGFLTENRKEQGLFLELAAQDNITMATLERDACYGLLDRKKARAISDDAINRLNIRVPHAQVRAGGLSGGNQQKLLISRWVAISPRILILDEPTRGVDVGAKSEIYRIMSQMAREGVAILMISSELPEVVGMSDRVYVMHEGRIAGELHHPDITQENIMTLATGVTEDHKKEVYHD</sequence>
<accession>Q7CG00</accession>
<accession>Q74QX5</accession>
<reference key="1">
    <citation type="journal article" date="2001" name="Nature">
        <title>Genome sequence of Yersinia pestis, the causative agent of plague.</title>
        <authorList>
            <person name="Parkhill J."/>
            <person name="Wren B.W."/>
            <person name="Thomson N.R."/>
            <person name="Titball R.W."/>
            <person name="Holden M.T.G."/>
            <person name="Prentice M.B."/>
            <person name="Sebaihia M."/>
            <person name="James K.D."/>
            <person name="Churcher C.M."/>
            <person name="Mungall K.L."/>
            <person name="Baker S."/>
            <person name="Basham D."/>
            <person name="Bentley S.D."/>
            <person name="Brooks K."/>
            <person name="Cerdeno-Tarraga A.-M."/>
            <person name="Chillingworth T."/>
            <person name="Cronin A."/>
            <person name="Davies R.M."/>
            <person name="Davis P."/>
            <person name="Dougan G."/>
            <person name="Feltwell T."/>
            <person name="Hamlin N."/>
            <person name="Holroyd S."/>
            <person name="Jagels K."/>
            <person name="Karlyshev A.V."/>
            <person name="Leather S."/>
            <person name="Moule S."/>
            <person name="Oyston P.C.F."/>
            <person name="Quail M.A."/>
            <person name="Rutherford K.M."/>
            <person name="Simmonds M."/>
            <person name="Skelton J."/>
            <person name="Stevens K."/>
            <person name="Whitehead S."/>
            <person name="Barrell B.G."/>
        </authorList>
    </citation>
    <scope>NUCLEOTIDE SEQUENCE [LARGE SCALE GENOMIC DNA]</scope>
    <source>
        <strain>CO-92 / Biovar Orientalis</strain>
    </source>
</reference>
<reference key="2">
    <citation type="journal article" date="2002" name="J. Bacteriol.">
        <title>Genome sequence of Yersinia pestis KIM.</title>
        <authorList>
            <person name="Deng W."/>
            <person name="Burland V."/>
            <person name="Plunkett G. III"/>
            <person name="Boutin A."/>
            <person name="Mayhew G.F."/>
            <person name="Liss P."/>
            <person name="Perna N.T."/>
            <person name="Rose D.J."/>
            <person name="Mau B."/>
            <person name="Zhou S."/>
            <person name="Schwartz D.C."/>
            <person name="Fetherston J.D."/>
            <person name="Lindler L.E."/>
            <person name="Brubaker R.R."/>
            <person name="Plano G.V."/>
            <person name="Straley S.C."/>
            <person name="McDonough K.A."/>
            <person name="Nilles M.L."/>
            <person name="Matson J.S."/>
            <person name="Blattner F.R."/>
            <person name="Perry R.D."/>
        </authorList>
    </citation>
    <scope>NUCLEOTIDE SEQUENCE [LARGE SCALE GENOMIC DNA]</scope>
    <source>
        <strain>KIM10+ / Biovar Mediaevalis</strain>
    </source>
</reference>
<reference key="3">
    <citation type="journal article" date="2004" name="DNA Res.">
        <title>Complete genome sequence of Yersinia pestis strain 91001, an isolate avirulent to humans.</title>
        <authorList>
            <person name="Song Y."/>
            <person name="Tong Z."/>
            <person name="Wang J."/>
            <person name="Wang L."/>
            <person name="Guo Z."/>
            <person name="Han Y."/>
            <person name="Zhang J."/>
            <person name="Pei D."/>
            <person name="Zhou D."/>
            <person name="Qin H."/>
            <person name="Pang X."/>
            <person name="Han Y."/>
            <person name="Zhai J."/>
            <person name="Li M."/>
            <person name="Cui B."/>
            <person name="Qi Z."/>
            <person name="Jin L."/>
            <person name="Dai R."/>
            <person name="Chen F."/>
            <person name="Li S."/>
            <person name="Ye C."/>
            <person name="Du Z."/>
            <person name="Lin W."/>
            <person name="Wang J."/>
            <person name="Yu J."/>
            <person name="Yang H."/>
            <person name="Wang J."/>
            <person name="Huang P."/>
            <person name="Yang R."/>
        </authorList>
    </citation>
    <scope>NUCLEOTIDE SEQUENCE [LARGE SCALE GENOMIC DNA]</scope>
    <source>
        <strain>91001 / Biovar Mediaevalis</strain>
    </source>
</reference>
<evidence type="ECO:0000255" key="1">
    <source>
        <dbReference type="HAMAP-Rule" id="MF_01716"/>
    </source>
</evidence>
<name>RBSA_YERPE</name>
<proteinExistence type="inferred from homology"/>
<gene>
    <name evidence="1" type="primary">rbsA</name>
    <name type="ordered locus">YPO3964</name>
    <name type="ordered locus">y3865</name>
    <name type="ordered locus">YP_3327</name>
</gene>
<comment type="function">
    <text evidence="1">Part of the ABC transporter complex RbsABC involved in ribose import. Responsible for energy coupling to the transport system.</text>
</comment>
<comment type="catalytic activity">
    <reaction evidence="1">
        <text>D-ribose(out) + ATP + H2O = D-ribose(in) + ADP + phosphate + H(+)</text>
        <dbReference type="Rhea" id="RHEA:29903"/>
        <dbReference type="ChEBI" id="CHEBI:15377"/>
        <dbReference type="ChEBI" id="CHEBI:15378"/>
        <dbReference type="ChEBI" id="CHEBI:30616"/>
        <dbReference type="ChEBI" id="CHEBI:43474"/>
        <dbReference type="ChEBI" id="CHEBI:47013"/>
        <dbReference type="ChEBI" id="CHEBI:456216"/>
        <dbReference type="EC" id="7.5.2.7"/>
    </reaction>
</comment>
<comment type="subunit">
    <text evidence="1">The complex is composed of an ATP-binding protein (RbsA), two transmembrane proteins (RbsC) and a solute-binding protein (RbsB).</text>
</comment>
<comment type="subcellular location">
    <subcellularLocation>
        <location evidence="1">Cell inner membrane</location>
        <topology evidence="1">Peripheral membrane protein</topology>
    </subcellularLocation>
</comment>
<comment type="similarity">
    <text evidence="1">Belongs to the ABC transporter superfamily. Ribose importer (TC 3.A.1.2.1) family.</text>
</comment>